<sequence length="445" mass="50572">MSKKLYIKTYGCQMNVYDSIKMQDLLYPFGYEPTENIEEADVIILNTCHIREKAAEKTYSELGRIKKLQDTRTKQGLSSAIIVVAGCVAQAEGEEIFTRTPYVDIVVGPQSYYNLPELISKVVRHEKHLIDLDFVEEAKFDQLPEQLYPQGTSAFISVQEGCDKFCTFCVVPYTRGAEFSRNVEQVYREALKVVSSGAKEIMLLGQNVNAYHGKGPADKIFSLADLLKHLAQIPNLERLRYTTSHPIDMNNDLIKLYGTEPKLMPFLHLPVQSGSNKILKAMNRKHDREYYFDIINRLREARPDIVLSSDFIVGFPGETDEDFEDTLDLVRRVKYGQCYSFKYSPRPGTPGATRTDQIPEHIKSERLTILQQELMAQQLAFNTSCVGSTMKVLFDRNGKFDDQIIGKTPYMQSVYIQNPNKSLLGKIIDVKITKASLNSLTGEIL</sequence>
<reference key="1">
    <citation type="journal article" date="2008" name="Infect. Immun.">
        <title>Genomic comparison of virulent Rickettsia rickettsii Sheila Smith and avirulent Rickettsia rickettsii Iowa.</title>
        <authorList>
            <person name="Ellison D.W."/>
            <person name="Clark T.R."/>
            <person name="Sturdevant D.E."/>
            <person name="Virtaneva K."/>
            <person name="Porcella S.F."/>
            <person name="Hackstadt T."/>
        </authorList>
    </citation>
    <scope>NUCLEOTIDE SEQUENCE [LARGE SCALE GENOMIC DNA]</scope>
    <source>
        <strain>Iowa</strain>
    </source>
</reference>
<name>MIAB_RICRO</name>
<proteinExistence type="inferred from homology"/>
<accession>B0BVC7</accession>
<gene>
    <name evidence="1" type="primary">miaB</name>
    <name type="ordered locus">RrIowa_1456</name>
</gene>
<protein>
    <recommendedName>
        <fullName evidence="1">tRNA-2-methylthio-N(6)-dimethylallyladenosine synthase</fullName>
        <ecNumber evidence="1">2.8.4.3</ecNumber>
    </recommendedName>
    <alternativeName>
        <fullName evidence="1">(Dimethylallyl)adenosine tRNA methylthiotransferase MiaB</fullName>
    </alternativeName>
    <alternativeName>
        <fullName evidence="1">tRNA-i(6)A37 methylthiotransferase</fullName>
    </alternativeName>
</protein>
<feature type="chain" id="PRO_0000374508" description="tRNA-2-methylthio-N(6)-dimethylallyladenosine synthase">
    <location>
        <begin position="1"/>
        <end position="445"/>
    </location>
</feature>
<feature type="domain" description="MTTase N-terminal" evidence="1">
    <location>
        <begin position="3"/>
        <end position="124"/>
    </location>
</feature>
<feature type="domain" description="Radical SAM core" evidence="2">
    <location>
        <begin position="148"/>
        <end position="380"/>
    </location>
</feature>
<feature type="domain" description="TRAM" evidence="1">
    <location>
        <begin position="383"/>
        <end position="445"/>
    </location>
</feature>
<feature type="binding site" evidence="1">
    <location>
        <position position="12"/>
    </location>
    <ligand>
        <name>[4Fe-4S] cluster</name>
        <dbReference type="ChEBI" id="CHEBI:49883"/>
        <label>1</label>
    </ligand>
</feature>
<feature type="binding site" evidence="1">
    <location>
        <position position="48"/>
    </location>
    <ligand>
        <name>[4Fe-4S] cluster</name>
        <dbReference type="ChEBI" id="CHEBI:49883"/>
        <label>1</label>
    </ligand>
</feature>
<feature type="binding site" evidence="1">
    <location>
        <position position="87"/>
    </location>
    <ligand>
        <name>[4Fe-4S] cluster</name>
        <dbReference type="ChEBI" id="CHEBI:49883"/>
        <label>1</label>
    </ligand>
</feature>
<feature type="binding site" evidence="1">
    <location>
        <position position="162"/>
    </location>
    <ligand>
        <name>[4Fe-4S] cluster</name>
        <dbReference type="ChEBI" id="CHEBI:49883"/>
        <label>2</label>
        <note>4Fe-4S-S-AdoMet</note>
    </ligand>
</feature>
<feature type="binding site" evidence="1">
    <location>
        <position position="166"/>
    </location>
    <ligand>
        <name>[4Fe-4S] cluster</name>
        <dbReference type="ChEBI" id="CHEBI:49883"/>
        <label>2</label>
        <note>4Fe-4S-S-AdoMet</note>
    </ligand>
</feature>
<feature type="binding site" evidence="1">
    <location>
        <position position="169"/>
    </location>
    <ligand>
        <name>[4Fe-4S] cluster</name>
        <dbReference type="ChEBI" id="CHEBI:49883"/>
        <label>2</label>
        <note>4Fe-4S-S-AdoMet</note>
    </ligand>
</feature>
<dbReference type="EC" id="2.8.4.3" evidence="1"/>
<dbReference type="EMBL" id="CP000766">
    <property type="protein sequence ID" value="ABY73187.1"/>
    <property type="molecule type" value="Genomic_DNA"/>
</dbReference>
<dbReference type="RefSeq" id="WP_012151355.1">
    <property type="nucleotide sequence ID" value="NC_010263.3"/>
</dbReference>
<dbReference type="SMR" id="B0BVC7"/>
<dbReference type="GeneID" id="79937854"/>
<dbReference type="KEGG" id="rrj:RrIowa_1456"/>
<dbReference type="eggNOG" id="COG0621">
    <property type="taxonomic scope" value="Bacteria"/>
</dbReference>
<dbReference type="HOGENOM" id="CLU_018697_2_2_5"/>
<dbReference type="Proteomes" id="UP000000796">
    <property type="component" value="Chromosome"/>
</dbReference>
<dbReference type="GO" id="GO:0005829">
    <property type="term" value="C:cytosol"/>
    <property type="evidence" value="ECO:0007669"/>
    <property type="project" value="TreeGrafter"/>
</dbReference>
<dbReference type="GO" id="GO:0051539">
    <property type="term" value="F:4 iron, 4 sulfur cluster binding"/>
    <property type="evidence" value="ECO:0007669"/>
    <property type="project" value="UniProtKB-UniRule"/>
</dbReference>
<dbReference type="GO" id="GO:0046872">
    <property type="term" value="F:metal ion binding"/>
    <property type="evidence" value="ECO:0007669"/>
    <property type="project" value="UniProtKB-KW"/>
</dbReference>
<dbReference type="GO" id="GO:0035597">
    <property type="term" value="F:N6-isopentenyladenosine methylthiotransferase activity"/>
    <property type="evidence" value="ECO:0007669"/>
    <property type="project" value="TreeGrafter"/>
</dbReference>
<dbReference type="CDD" id="cd01335">
    <property type="entry name" value="Radical_SAM"/>
    <property type="match status" value="1"/>
</dbReference>
<dbReference type="FunFam" id="3.40.50.12160:FF:000001">
    <property type="entry name" value="tRNA-2-methylthio-N(6)-dimethylallyladenosine synthase"/>
    <property type="match status" value="1"/>
</dbReference>
<dbReference type="FunFam" id="3.80.30.20:FF:000001">
    <property type="entry name" value="tRNA-2-methylthio-N(6)-dimethylallyladenosine synthase 2"/>
    <property type="match status" value="1"/>
</dbReference>
<dbReference type="Gene3D" id="3.40.50.12160">
    <property type="entry name" value="Methylthiotransferase, N-terminal domain"/>
    <property type="match status" value="1"/>
</dbReference>
<dbReference type="Gene3D" id="3.80.30.20">
    <property type="entry name" value="tm_1862 like domain"/>
    <property type="match status" value="1"/>
</dbReference>
<dbReference type="HAMAP" id="MF_01864">
    <property type="entry name" value="tRNA_metthiotr_MiaB"/>
    <property type="match status" value="1"/>
</dbReference>
<dbReference type="InterPro" id="IPR006638">
    <property type="entry name" value="Elp3/MiaA/NifB-like_rSAM"/>
</dbReference>
<dbReference type="InterPro" id="IPR005839">
    <property type="entry name" value="Methylthiotransferase"/>
</dbReference>
<dbReference type="InterPro" id="IPR020612">
    <property type="entry name" value="Methylthiotransferase_CS"/>
</dbReference>
<dbReference type="InterPro" id="IPR013848">
    <property type="entry name" value="Methylthiotransferase_N"/>
</dbReference>
<dbReference type="InterPro" id="IPR038135">
    <property type="entry name" value="Methylthiotransferase_N_sf"/>
</dbReference>
<dbReference type="InterPro" id="IPR006463">
    <property type="entry name" value="MiaB_methiolase"/>
</dbReference>
<dbReference type="InterPro" id="IPR007197">
    <property type="entry name" value="rSAM"/>
</dbReference>
<dbReference type="InterPro" id="IPR023404">
    <property type="entry name" value="rSAM_horseshoe"/>
</dbReference>
<dbReference type="InterPro" id="IPR002792">
    <property type="entry name" value="TRAM_dom"/>
</dbReference>
<dbReference type="NCBIfam" id="TIGR01574">
    <property type="entry name" value="miaB-methiolase"/>
    <property type="match status" value="1"/>
</dbReference>
<dbReference type="NCBIfam" id="TIGR00089">
    <property type="entry name" value="MiaB/RimO family radical SAM methylthiotransferase"/>
    <property type="match status" value="1"/>
</dbReference>
<dbReference type="PANTHER" id="PTHR43020">
    <property type="entry name" value="CDK5 REGULATORY SUBUNIT-ASSOCIATED PROTEIN 1"/>
    <property type="match status" value="1"/>
</dbReference>
<dbReference type="PANTHER" id="PTHR43020:SF2">
    <property type="entry name" value="MITOCHONDRIAL TRNA METHYLTHIOTRANSFERASE CDK5RAP1"/>
    <property type="match status" value="1"/>
</dbReference>
<dbReference type="Pfam" id="PF04055">
    <property type="entry name" value="Radical_SAM"/>
    <property type="match status" value="1"/>
</dbReference>
<dbReference type="Pfam" id="PF01938">
    <property type="entry name" value="TRAM"/>
    <property type="match status" value="1"/>
</dbReference>
<dbReference type="Pfam" id="PF00919">
    <property type="entry name" value="UPF0004"/>
    <property type="match status" value="1"/>
</dbReference>
<dbReference type="SFLD" id="SFLDF00273">
    <property type="entry name" value="(dimethylallyl)adenosine_tRNA"/>
    <property type="match status" value="1"/>
</dbReference>
<dbReference type="SFLD" id="SFLDG01082">
    <property type="entry name" value="B12-binding_domain_containing"/>
    <property type="match status" value="1"/>
</dbReference>
<dbReference type="SFLD" id="SFLDS00029">
    <property type="entry name" value="Radical_SAM"/>
    <property type="match status" value="1"/>
</dbReference>
<dbReference type="SMART" id="SM00729">
    <property type="entry name" value="Elp3"/>
    <property type="match status" value="1"/>
</dbReference>
<dbReference type="SUPFAM" id="SSF102114">
    <property type="entry name" value="Radical SAM enzymes"/>
    <property type="match status" value="1"/>
</dbReference>
<dbReference type="PROSITE" id="PS51449">
    <property type="entry name" value="MTTASE_N"/>
    <property type="match status" value="1"/>
</dbReference>
<dbReference type="PROSITE" id="PS01278">
    <property type="entry name" value="MTTASE_RADICAL"/>
    <property type="match status" value="1"/>
</dbReference>
<dbReference type="PROSITE" id="PS51918">
    <property type="entry name" value="RADICAL_SAM"/>
    <property type="match status" value="1"/>
</dbReference>
<dbReference type="PROSITE" id="PS50926">
    <property type="entry name" value="TRAM"/>
    <property type="match status" value="1"/>
</dbReference>
<organism>
    <name type="scientific">Rickettsia rickettsii (strain Iowa)</name>
    <dbReference type="NCBI Taxonomy" id="452659"/>
    <lineage>
        <taxon>Bacteria</taxon>
        <taxon>Pseudomonadati</taxon>
        <taxon>Pseudomonadota</taxon>
        <taxon>Alphaproteobacteria</taxon>
        <taxon>Rickettsiales</taxon>
        <taxon>Rickettsiaceae</taxon>
        <taxon>Rickettsieae</taxon>
        <taxon>Rickettsia</taxon>
        <taxon>spotted fever group</taxon>
    </lineage>
</organism>
<comment type="function">
    <text evidence="1">Catalyzes the methylthiolation of N6-(dimethylallyl)adenosine (i(6)A), leading to the formation of 2-methylthio-N6-(dimethylallyl)adenosine (ms(2)i(6)A) at position 37 in tRNAs that read codons beginning with uridine.</text>
</comment>
<comment type="catalytic activity">
    <reaction evidence="1">
        <text>N(6)-dimethylallyladenosine(37) in tRNA + (sulfur carrier)-SH + AH2 + 2 S-adenosyl-L-methionine = 2-methylsulfanyl-N(6)-dimethylallyladenosine(37) in tRNA + (sulfur carrier)-H + 5'-deoxyadenosine + L-methionine + A + S-adenosyl-L-homocysteine + 2 H(+)</text>
        <dbReference type="Rhea" id="RHEA:37067"/>
        <dbReference type="Rhea" id="RHEA-COMP:10375"/>
        <dbReference type="Rhea" id="RHEA-COMP:10376"/>
        <dbReference type="Rhea" id="RHEA-COMP:14737"/>
        <dbReference type="Rhea" id="RHEA-COMP:14739"/>
        <dbReference type="ChEBI" id="CHEBI:13193"/>
        <dbReference type="ChEBI" id="CHEBI:15378"/>
        <dbReference type="ChEBI" id="CHEBI:17319"/>
        <dbReference type="ChEBI" id="CHEBI:17499"/>
        <dbReference type="ChEBI" id="CHEBI:29917"/>
        <dbReference type="ChEBI" id="CHEBI:57844"/>
        <dbReference type="ChEBI" id="CHEBI:57856"/>
        <dbReference type="ChEBI" id="CHEBI:59789"/>
        <dbReference type="ChEBI" id="CHEBI:64428"/>
        <dbReference type="ChEBI" id="CHEBI:74415"/>
        <dbReference type="ChEBI" id="CHEBI:74417"/>
        <dbReference type="EC" id="2.8.4.3"/>
    </reaction>
</comment>
<comment type="cofactor">
    <cofactor evidence="1">
        <name>[4Fe-4S] cluster</name>
        <dbReference type="ChEBI" id="CHEBI:49883"/>
    </cofactor>
    <text evidence="1">Binds 2 [4Fe-4S] clusters. One cluster is coordinated with 3 cysteines and an exchangeable S-adenosyl-L-methionine.</text>
</comment>
<comment type="subunit">
    <text evidence="1">Monomer.</text>
</comment>
<comment type="subcellular location">
    <subcellularLocation>
        <location evidence="1">Cytoplasm</location>
    </subcellularLocation>
</comment>
<comment type="similarity">
    <text evidence="1">Belongs to the methylthiotransferase family. MiaB subfamily.</text>
</comment>
<evidence type="ECO:0000255" key="1">
    <source>
        <dbReference type="HAMAP-Rule" id="MF_01864"/>
    </source>
</evidence>
<evidence type="ECO:0000255" key="2">
    <source>
        <dbReference type="PROSITE-ProRule" id="PRU01266"/>
    </source>
</evidence>
<keyword id="KW-0004">4Fe-4S</keyword>
<keyword id="KW-0963">Cytoplasm</keyword>
<keyword id="KW-0408">Iron</keyword>
<keyword id="KW-0411">Iron-sulfur</keyword>
<keyword id="KW-0479">Metal-binding</keyword>
<keyword id="KW-0949">S-adenosyl-L-methionine</keyword>
<keyword id="KW-0808">Transferase</keyword>
<keyword id="KW-0819">tRNA processing</keyword>